<proteinExistence type="inferred from homology"/>
<organism>
    <name type="scientific">Escherichia coli (strain UTI89 / UPEC)</name>
    <dbReference type="NCBI Taxonomy" id="364106"/>
    <lineage>
        <taxon>Bacteria</taxon>
        <taxon>Pseudomonadati</taxon>
        <taxon>Pseudomonadota</taxon>
        <taxon>Gammaproteobacteria</taxon>
        <taxon>Enterobacterales</taxon>
        <taxon>Enterobacteriaceae</taxon>
        <taxon>Escherichia</taxon>
    </lineage>
</organism>
<feature type="chain" id="PRO_1000008904" description="Sulfate adenylyltransferase subunit 1">
    <location>
        <begin position="1"/>
        <end position="475"/>
    </location>
</feature>
<feature type="domain" description="tr-type G">
    <location>
        <begin position="25"/>
        <end position="239"/>
    </location>
</feature>
<feature type="region of interest" description="G1" evidence="1">
    <location>
        <begin position="34"/>
        <end position="41"/>
    </location>
</feature>
<feature type="region of interest" description="G2" evidence="1">
    <location>
        <begin position="92"/>
        <end position="96"/>
    </location>
</feature>
<feature type="region of interest" description="G3" evidence="1">
    <location>
        <begin position="113"/>
        <end position="116"/>
    </location>
</feature>
<feature type="region of interest" description="G4" evidence="1">
    <location>
        <begin position="168"/>
        <end position="171"/>
    </location>
</feature>
<feature type="region of interest" description="G5" evidence="1">
    <location>
        <begin position="206"/>
        <end position="208"/>
    </location>
</feature>
<feature type="binding site" evidence="2">
    <location>
        <begin position="34"/>
        <end position="41"/>
    </location>
    <ligand>
        <name>GTP</name>
        <dbReference type="ChEBI" id="CHEBI:37565"/>
    </ligand>
</feature>
<feature type="binding site" evidence="2">
    <location>
        <begin position="113"/>
        <end position="117"/>
    </location>
    <ligand>
        <name>GTP</name>
        <dbReference type="ChEBI" id="CHEBI:37565"/>
    </ligand>
</feature>
<feature type="binding site" evidence="2">
    <location>
        <begin position="168"/>
        <end position="171"/>
    </location>
    <ligand>
        <name>GTP</name>
        <dbReference type="ChEBI" id="CHEBI:37565"/>
    </ligand>
</feature>
<keyword id="KW-0067">ATP-binding</keyword>
<keyword id="KW-0342">GTP-binding</keyword>
<keyword id="KW-0547">Nucleotide-binding</keyword>
<keyword id="KW-0548">Nucleotidyltransferase</keyword>
<keyword id="KW-0808">Transferase</keyword>
<reference key="1">
    <citation type="journal article" date="2006" name="Proc. Natl. Acad. Sci. U.S.A.">
        <title>Identification of genes subject to positive selection in uropathogenic strains of Escherichia coli: a comparative genomics approach.</title>
        <authorList>
            <person name="Chen S.L."/>
            <person name="Hung C.-S."/>
            <person name="Xu J."/>
            <person name="Reigstad C.S."/>
            <person name="Magrini V."/>
            <person name="Sabo A."/>
            <person name="Blasiar D."/>
            <person name="Bieri T."/>
            <person name="Meyer R.R."/>
            <person name="Ozersky P."/>
            <person name="Armstrong J.R."/>
            <person name="Fulton R.S."/>
            <person name="Latreille J.P."/>
            <person name="Spieth J."/>
            <person name="Hooton T.M."/>
            <person name="Mardis E.R."/>
            <person name="Hultgren S.J."/>
            <person name="Gordon J.I."/>
        </authorList>
    </citation>
    <scope>NUCLEOTIDE SEQUENCE [LARGE SCALE GENOMIC DNA]</scope>
    <source>
        <strain>UTI89 / UPEC</strain>
    </source>
</reference>
<evidence type="ECO:0000250" key="1"/>
<evidence type="ECO:0000255" key="2">
    <source>
        <dbReference type="HAMAP-Rule" id="MF_00062"/>
    </source>
</evidence>
<dbReference type="EC" id="2.7.7.4" evidence="2"/>
<dbReference type="EMBL" id="CP000243">
    <property type="protein sequence ID" value="ABE08574.1"/>
    <property type="molecule type" value="Genomic_DNA"/>
</dbReference>
<dbReference type="RefSeq" id="WP_001090357.1">
    <property type="nucleotide sequence ID" value="NZ_CP064825.1"/>
</dbReference>
<dbReference type="SMR" id="Q1R7U0"/>
<dbReference type="KEGG" id="eci:UTI89_C3122"/>
<dbReference type="HOGENOM" id="CLU_007265_5_2_6"/>
<dbReference type="UniPathway" id="UPA00140">
    <property type="reaction ID" value="UER00204"/>
</dbReference>
<dbReference type="Proteomes" id="UP000001952">
    <property type="component" value="Chromosome"/>
</dbReference>
<dbReference type="GO" id="GO:0005524">
    <property type="term" value="F:ATP binding"/>
    <property type="evidence" value="ECO:0007669"/>
    <property type="project" value="UniProtKB-KW"/>
</dbReference>
<dbReference type="GO" id="GO:0005525">
    <property type="term" value="F:GTP binding"/>
    <property type="evidence" value="ECO:0007669"/>
    <property type="project" value="UniProtKB-UniRule"/>
</dbReference>
<dbReference type="GO" id="GO:0003924">
    <property type="term" value="F:GTPase activity"/>
    <property type="evidence" value="ECO:0007669"/>
    <property type="project" value="InterPro"/>
</dbReference>
<dbReference type="GO" id="GO:0004781">
    <property type="term" value="F:sulfate adenylyltransferase (ATP) activity"/>
    <property type="evidence" value="ECO:0007669"/>
    <property type="project" value="UniProtKB-UniRule"/>
</dbReference>
<dbReference type="GO" id="GO:0070814">
    <property type="term" value="P:hydrogen sulfide biosynthetic process"/>
    <property type="evidence" value="ECO:0007669"/>
    <property type="project" value="UniProtKB-UniRule"/>
</dbReference>
<dbReference type="GO" id="GO:0000103">
    <property type="term" value="P:sulfate assimilation"/>
    <property type="evidence" value="ECO:0007669"/>
    <property type="project" value="UniProtKB-UniRule"/>
</dbReference>
<dbReference type="CDD" id="cd04166">
    <property type="entry name" value="CysN_ATPS"/>
    <property type="match status" value="1"/>
</dbReference>
<dbReference type="CDD" id="cd03695">
    <property type="entry name" value="CysN_NodQ_II"/>
    <property type="match status" value="1"/>
</dbReference>
<dbReference type="CDD" id="cd04095">
    <property type="entry name" value="CysN_NoDQ_III"/>
    <property type="match status" value="1"/>
</dbReference>
<dbReference type="FunFam" id="2.40.30.10:FF:000027">
    <property type="entry name" value="Sulfate adenylyltransferase subunit 1"/>
    <property type="match status" value="1"/>
</dbReference>
<dbReference type="FunFam" id="2.40.30.10:FF:000031">
    <property type="entry name" value="Sulfate adenylyltransferase subunit 1"/>
    <property type="match status" value="1"/>
</dbReference>
<dbReference type="FunFam" id="3.40.50.300:FF:000119">
    <property type="entry name" value="Sulfate adenylyltransferase subunit 1"/>
    <property type="match status" value="1"/>
</dbReference>
<dbReference type="Gene3D" id="3.40.50.300">
    <property type="entry name" value="P-loop containing nucleotide triphosphate hydrolases"/>
    <property type="match status" value="1"/>
</dbReference>
<dbReference type="Gene3D" id="2.40.30.10">
    <property type="entry name" value="Translation factors"/>
    <property type="match status" value="2"/>
</dbReference>
<dbReference type="HAMAP" id="MF_00062">
    <property type="entry name" value="Sulf_adenylyltr_sub1"/>
    <property type="match status" value="1"/>
</dbReference>
<dbReference type="InterPro" id="IPR041757">
    <property type="entry name" value="CysN_GTP-bd"/>
</dbReference>
<dbReference type="InterPro" id="IPR044138">
    <property type="entry name" value="CysN_II"/>
</dbReference>
<dbReference type="InterPro" id="IPR044139">
    <property type="entry name" value="CysN_NoDQ_III"/>
</dbReference>
<dbReference type="InterPro" id="IPR031157">
    <property type="entry name" value="G_TR_CS"/>
</dbReference>
<dbReference type="InterPro" id="IPR054696">
    <property type="entry name" value="GTP-eEF1A_C"/>
</dbReference>
<dbReference type="InterPro" id="IPR027417">
    <property type="entry name" value="P-loop_NTPase"/>
</dbReference>
<dbReference type="InterPro" id="IPR005225">
    <property type="entry name" value="Small_GTP-bd"/>
</dbReference>
<dbReference type="InterPro" id="IPR011779">
    <property type="entry name" value="SO4_adenylTrfase_lsu"/>
</dbReference>
<dbReference type="InterPro" id="IPR000795">
    <property type="entry name" value="T_Tr_GTP-bd_dom"/>
</dbReference>
<dbReference type="InterPro" id="IPR050100">
    <property type="entry name" value="TRAFAC_GTPase_members"/>
</dbReference>
<dbReference type="InterPro" id="IPR009000">
    <property type="entry name" value="Transl_B-barrel_sf"/>
</dbReference>
<dbReference type="InterPro" id="IPR009001">
    <property type="entry name" value="Transl_elong_EF1A/Init_IF2_C"/>
</dbReference>
<dbReference type="NCBIfam" id="TIGR02034">
    <property type="entry name" value="CysN"/>
    <property type="match status" value="1"/>
</dbReference>
<dbReference type="NCBIfam" id="NF003478">
    <property type="entry name" value="PRK05124.1"/>
    <property type="match status" value="1"/>
</dbReference>
<dbReference type="NCBIfam" id="TIGR00231">
    <property type="entry name" value="small_GTP"/>
    <property type="match status" value="1"/>
</dbReference>
<dbReference type="PANTHER" id="PTHR23115">
    <property type="entry name" value="TRANSLATION FACTOR"/>
    <property type="match status" value="1"/>
</dbReference>
<dbReference type="Pfam" id="PF22594">
    <property type="entry name" value="GTP-eEF1A_C"/>
    <property type="match status" value="1"/>
</dbReference>
<dbReference type="Pfam" id="PF00009">
    <property type="entry name" value="GTP_EFTU"/>
    <property type="match status" value="1"/>
</dbReference>
<dbReference type="PRINTS" id="PR00315">
    <property type="entry name" value="ELONGATNFCT"/>
</dbReference>
<dbReference type="SUPFAM" id="SSF50465">
    <property type="entry name" value="EF-Tu/eEF-1alpha/eIF2-gamma C-terminal domain"/>
    <property type="match status" value="1"/>
</dbReference>
<dbReference type="SUPFAM" id="SSF52540">
    <property type="entry name" value="P-loop containing nucleoside triphosphate hydrolases"/>
    <property type="match status" value="1"/>
</dbReference>
<dbReference type="SUPFAM" id="SSF50447">
    <property type="entry name" value="Translation proteins"/>
    <property type="match status" value="1"/>
</dbReference>
<dbReference type="PROSITE" id="PS00301">
    <property type="entry name" value="G_TR_1"/>
    <property type="match status" value="1"/>
</dbReference>
<dbReference type="PROSITE" id="PS51722">
    <property type="entry name" value="G_TR_2"/>
    <property type="match status" value="1"/>
</dbReference>
<accession>Q1R7U0</accession>
<comment type="function">
    <text evidence="2">With CysD forms the ATP sulfurylase (ATPS) that catalyzes the adenylation of sulfate producing adenosine 5'-phosphosulfate (APS) and diphosphate, the first enzymatic step in sulfur assimilation pathway. APS synthesis involves the formation of a high-energy phosphoric-sulfuric acid anhydride bond driven by GTP hydrolysis by CysN coupled to ATP hydrolysis by CysD.</text>
</comment>
<comment type="catalytic activity">
    <reaction evidence="2">
        <text>sulfate + ATP + H(+) = adenosine 5'-phosphosulfate + diphosphate</text>
        <dbReference type="Rhea" id="RHEA:18133"/>
        <dbReference type="ChEBI" id="CHEBI:15378"/>
        <dbReference type="ChEBI" id="CHEBI:16189"/>
        <dbReference type="ChEBI" id="CHEBI:30616"/>
        <dbReference type="ChEBI" id="CHEBI:33019"/>
        <dbReference type="ChEBI" id="CHEBI:58243"/>
        <dbReference type="EC" id="2.7.7.4"/>
    </reaction>
</comment>
<comment type="pathway">
    <text evidence="2">Sulfur metabolism; hydrogen sulfide biosynthesis; sulfite from sulfate: step 1/3.</text>
</comment>
<comment type="subunit">
    <text evidence="2">Heterodimer composed of CysD, the smaller subunit, and CysN.</text>
</comment>
<comment type="similarity">
    <text evidence="2">Belongs to the TRAFAC class translation factor GTPase superfamily. Classic translation factor GTPase family. CysN/NodQ subfamily.</text>
</comment>
<sequence>MNTALAQQIANEGGVEAWMIAQQHKSLLRFLTCGSVDDGKSTLIGRLLHDTRQIYEDQLSSLHNDSKRHGTQGEKLDLALLVDGLQAEREQGITIDVAYRYFSTEKRKFIIADTPGHEQYTRNMATGASTCELAILLIDARKGVLDQTRRHSFISTLLGIKHLVVAINKMDLVDYSEETFTRIREDYLTFAGQLPGNLDIRFVPLSALEGDNVASQSESMPWYSGPTLLEVLETVEIQRVVDAQPMRFPVQYVNRPNLDFRGYAGTLASGRVEVGQRVKVLPSGVESNVARIVTFDGDREEAFAGEAITLVLTDEIDISRGDLLLAADEALPAVQSASVDVVWMAEQPLSPGQSYDIKIAGKKTRARVDGIHYQVDINNLTQREVENLPLNGIGLVDLTFDEPLVLDRYQQNPVTGGLIFIDRLSNVTVGAGMVHEPVSQATAAPSEFSAFELELNALVRRHFPHWGARDLLGDK</sequence>
<gene>
    <name evidence="2" type="primary">cysN</name>
    <name type="ordered locus">UTI89_C3122</name>
</gene>
<name>CYSN_ECOUT</name>
<protein>
    <recommendedName>
        <fullName evidence="2">Sulfate adenylyltransferase subunit 1</fullName>
        <ecNumber evidence="2">2.7.7.4</ecNumber>
    </recommendedName>
    <alternativeName>
        <fullName evidence="2">ATP-sulfurylase large subunit</fullName>
    </alternativeName>
    <alternativeName>
        <fullName evidence="2">Sulfate adenylate transferase</fullName>
        <shortName evidence="2">SAT</shortName>
    </alternativeName>
</protein>